<gene>
    <name evidence="1" type="primary">ndhE</name>
</gene>
<evidence type="ECO:0000255" key="1">
    <source>
        <dbReference type="HAMAP-Rule" id="MF_01456"/>
    </source>
</evidence>
<accession>B0Z511</accession>
<protein>
    <recommendedName>
        <fullName evidence="1">NAD(P)H-quinone oxidoreductase subunit 4L, chloroplastic</fullName>
        <ecNumber evidence="1">7.1.1.-</ecNumber>
    </recommendedName>
    <alternativeName>
        <fullName evidence="1">NAD(P)H dehydrogenase subunit 4L</fullName>
    </alternativeName>
    <alternativeName>
        <fullName evidence="1">NADH-plastoquinone oxidoreductase subunit 4L</fullName>
    </alternativeName>
</protein>
<reference key="1">
    <citation type="journal article" date="2008" name="Nucleic Acids Res.">
        <title>The complete nucleotide sequences of the five genetically distinct plastid genomes of Oenothera, subsection Oenothera: I. Sequence evaluation and plastome evolution.</title>
        <authorList>
            <person name="Greiner S."/>
            <person name="Wang X."/>
            <person name="Rauwolf U."/>
            <person name="Silber M.V."/>
            <person name="Mayer K."/>
            <person name="Meurer J."/>
            <person name="Haberer G."/>
            <person name="Herrmann R.G."/>
        </authorList>
    </citation>
    <scope>NUCLEOTIDE SEQUENCE [LARGE SCALE GENOMIC DNA]</scope>
    <source>
        <strain>cv. Suaveolens Grado</strain>
    </source>
</reference>
<name>NU4LC_OENBI</name>
<comment type="function">
    <text evidence="1">NDH shuttles electrons from NAD(P)H:plastoquinone, via FMN and iron-sulfur (Fe-S) centers, to quinones in the photosynthetic chain and possibly in a chloroplast respiratory chain. The immediate electron acceptor for the enzyme in this species is believed to be plastoquinone. Couples the redox reaction to proton translocation, and thus conserves the redox energy in a proton gradient.</text>
</comment>
<comment type="catalytic activity">
    <reaction evidence="1">
        <text>a plastoquinone + NADH + (n+1) H(+)(in) = a plastoquinol + NAD(+) + n H(+)(out)</text>
        <dbReference type="Rhea" id="RHEA:42608"/>
        <dbReference type="Rhea" id="RHEA-COMP:9561"/>
        <dbReference type="Rhea" id="RHEA-COMP:9562"/>
        <dbReference type="ChEBI" id="CHEBI:15378"/>
        <dbReference type="ChEBI" id="CHEBI:17757"/>
        <dbReference type="ChEBI" id="CHEBI:57540"/>
        <dbReference type="ChEBI" id="CHEBI:57945"/>
        <dbReference type="ChEBI" id="CHEBI:62192"/>
    </reaction>
</comment>
<comment type="catalytic activity">
    <reaction evidence="1">
        <text>a plastoquinone + NADPH + (n+1) H(+)(in) = a plastoquinol + NADP(+) + n H(+)(out)</text>
        <dbReference type="Rhea" id="RHEA:42612"/>
        <dbReference type="Rhea" id="RHEA-COMP:9561"/>
        <dbReference type="Rhea" id="RHEA-COMP:9562"/>
        <dbReference type="ChEBI" id="CHEBI:15378"/>
        <dbReference type="ChEBI" id="CHEBI:17757"/>
        <dbReference type="ChEBI" id="CHEBI:57783"/>
        <dbReference type="ChEBI" id="CHEBI:58349"/>
        <dbReference type="ChEBI" id="CHEBI:62192"/>
    </reaction>
</comment>
<comment type="subunit">
    <text evidence="1">NDH is composed of at least 16 different subunits, 5 of which are encoded in the nucleus.</text>
</comment>
<comment type="subcellular location">
    <subcellularLocation>
        <location evidence="1">Plastid</location>
        <location evidence="1">Chloroplast thylakoid membrane</location>
        <topology evidence="1">Multi-pass membrane protein</topology>
    </subcellularLocation>
</comment>
<comment type="similarity">
    <text evidence="1">Belongs to the complex I subunit 4L family.</text>
</comment>
<feature type="chain" id="PRO_0000360353" description="NAD(P)H-quinone oxidoreductase subunit 4L, chloroplastic">
    <location>
        <begin position="1"/>
        <end position="101"/>
    </location>
</feature>
<feature type="transmembrane region" description="Helical" evidence="1">
    <location>
        <begin position="2"/>
        <end position="22"/>
    </location>
</feature>
<feature type="transmembrane region" description="Helical" evidence="1">
    <location>
        <begin position="32"/>
        <end position="52"/>
    </location>
</feature>
<feature type="transmembrane region" description="Helical" evidence="1">
    <location>
        <begin position="61"/>
        <end position="81"/>
    </location>
</feature>
<sequence length="101" mass="11299">MILEHVLVLSAYLFSIGIYGLITSRNMVRALMCLELILNSVNLNFVTFSDFFDSRQLKGDIFSIFIIAIAAAEAAIGLAIVSSIYRNRKSIRINQSNLLNK</sequence>
<organism>
    <name type="scientific">Oenothera biennis</name>
    <name type="common">German evening primrose</name>
    <name type="synonym">Onagra biennis</name>
    <dbReference type="NCBI Taxonomy" id="3942"/>
    <lineage>
        <taxon>Eukaryota</taxon>
        <taxon>Viridiplantae</taxon>
        <taxon>Streptophyta</taxon>
        <taxon>Embryophyta</taxon>
        <taxon>Tracheophyta</taxon>
        <taxon>Spermatophyta</taxon>
        <taxon>Magnoliopsida</taxon>
        <taxon>eudicotyledons</taxon>
        <taxon>Gunneridae</taxon>
        <taxon>Pentapetalae</taxon>
        <taxon>rosids</taxon>
        <taxon>malvids</taxon>
        <taxon>Myrtales</taxon>
        <taxon>Onagraceae</taxon>
        <taxon>Onagroideae</taxon>
        <taxon>Onagreae</taxon>
        <taxon>Oenothera</taxon>
    </lineage>
</organism>
<geneLocation type="chloroplast"/>
<proteinExistence type="inferred from homology"/>
<keyword id="KW-0150">Chloroplast</keyword>
<keyword id="KW-0472">Membrane</keyword>
<keyword id="KW-0520">NAD</keyword>
<keyword id="KW-0521">NADP</keyword>
<keyword id="KW-0934">Plastid</keyword>
<keyword id="KW-0618">Plastoquinone</keyword>
<keyword id="KW-0874">Quinone</keyword>
<keyword id="KW-0793">Thylakoid</keyword>
<keyword id="KW-1278">Translocase</keyword>
<keyword id="KW-0812">Transmembrane</keyword>
<keyword id="KW-1133">Transmembrane helix</keyword>
<keyword id="KW-0813">Transport</keyword>
<dbReference type="EC" id="7.1.1.-" evidence="1"/>
<dbReference type="EMBL" id="EU262889">
    <property type="protein sequence ID" value="ABW98923.1"/>
    <property type="molecule type" value="Genomic_DNA"/>
</dbReference>
<dbReference type="RefSeq" id="YP_001687418.1">
    <property type="nucleotide sequence ID" value="NC_010361.1"/>
</dbReference>
<dbReference type="SMR" id="B0Z511"/>
<dbReference type="GeneID" id="5952016"/>
<dbReference type="GO" id="GO:0009535">
    <property type="term" value="C:chloroplast thylakoid membrane"/>
    <property type="evidence" value="ECO:0007669"/>
    <property type="project" value="UniProtKB-SubCell"/>
</dbReference>
<dbReference type="GO" id="GO:0030964">
    <property type="term" value="C:NADH dehydrogenase complex"/>
    <property type="evidence" value="ECO:0007669"/>
    <property type="project" value="TreeGrafter"/>
</dbReference>
<dbReference type="GO" id="GO:0016655">
    <property type="term" value="F:oxidoreductase activity, acting on NAD(P)H, quinone or similar compound as acceptor"/>
    <property type="evidence" value="ECO:0007669"/>
    <property type="project" value="UniProtKB-UniRule"/>
</dbReference>
<dbReference type="GO" id="GO:0048038">
    <property type="term" value="F:quinone binding"/>
    <property type="evidence" value="ECO:0007669"/>
    <property type="project" value="UniProtKB-KW"/>
</dbReference>
<dbReference type="GO" id="GO:0042773">
    <property type="term" value="P:ATP synthesis coupled electron transport"/>
    <property type="evidence" value="ECO:0007669"/>
    <property type="project" value="InterPro"/>
</dbReference>
<dbReference type="GO" id="GO:0019684">
    <property type="term" value="P:photosynthesis, light reaction"/>
    <property type="evidence" value="ECO:0007669"/>
    <property type="project" value="UniProtKB-UniRule"/>
</dbReference>
<dbReference type="FunFam" id="1.10.287.3510:FF:000001">
    <property type="entry name" value="NADH-quinone oxidoreductase subunit K"/>
    <property type="match status" value="1"/>
</dbReference>
<dbReference type="Gene3D" id="1.10.287.3510">
    <property type="match status" value="1"/>
</dbReference>
<dbReference type="HAMAP" id="MF_01456">
    <property type="entry name" value="NDH1_NuoK"/>
    <property type="match status" value="1"/>
</dbReference>
<dbReference type="InterPro" id="IPR001133">
    <property type="entry name" value="NADH_UbQ_OxRdtase_chain4L/K"/>
</dbReference>
<dbReference type="InterPro" id="IPR039428">
    <property type="entry name" value="NUOK/Mnh_C1-like"/>
</dbReference>
<dbReference type="NCBIfam" id="NF004320">
    <property type="entry name" value="PRK05715.1-2"/>
    <property type="match status" value="1"/>
</dbReference>
<dbReference type="NCBIfam" id="NF004322">
    <property type="entry name" value="PRK05715.1-4"/>
    <property type="match status" value="1"/>
</dbReference>
<dbReference type="NCBIfam" id="NF004323">
    <property type="entry name" value="PRK05715.1-5"/>
    <property type="match status" value="1"/>
</dbReference>
<dbReference type="PANTHER" id="PTHR11434:SF16">
    <property type="entry name" value="NADH-UBIQUINONE OXIDOREDUCTASE CHAIN 4L"/>
    <property type="match status" value="1"/>
</dbReference>
<dbReference type="PANTHER" id="PTHR11434">
    <property type="entry name" value="NADH-UBIQUINONE OXIDOREDUCTASE SUBUNIT ND4L"/>
    <property type="match status" value="1"/>
</dbReference>
<dbReference type="Pfam" id="PF00420">
    <property type="entry name" value="Oxidored_q2"/>
    <property type="match status" value="1"/>
</dbReference>